<protein>
    <recommendedName>
        <fullName evidence="1">2,3,4,5-tetrahydropyridine-2,6-dicarboxylate N-succinyltransferase</fullName>
        <ecNumber evidence="1">2.3.1.117</ecNumber>
    </recommendedName>
    <alternativeName>
        <fullName evidence="1">Tetrahydrodipicolinate N-succinyltransferase</fullName>
        <shortName evidence="1">THDP succinyltransferase</shortName>
        <shortName evidence="1">THP succinyltransferase</shortName>
        <shortName evidence="1">Tetrahydropicolinate succinylase</shortName>
    </alternativeName>
</protein>
<dbReference type="EC" id="2.3.1.117" evidence="1"/>
<dbReference type="EMBL" id="AE008692">
    <property type="protein sequence ID" value="AAV89055.1"/>
    <property type="molecule type" value="Genomic_DNA"/>
</dbReference>
<dbReference type="RefSeq" id="WP_011240345.1">
    <property type="nucleotide sequence ID" value="NZ_CP035711.1"/>
</dbReference>
<dbReference type="SMR" id="Q5NQF0"/>
<dbReference type="STRING" id="264203.ZMO0431"/>
<dbReference type="KEGG" id="zmo:ZMO0431"/>
<dbReference type="eggNOG" id="COG2171">
    <property type="taxonomic scope" value="Bacteria"/>
</dbReference>
<dbReference type="HOGENOM" id="CLU_050859_0_1_5"/>
<dbReference type="UniPathway" id="UPA00034">
    <property type="reaction ID" value="UER00019"/>
</dbReference>
<dbReference type="Proteomes" id="UP000001173">
    <property type="component" value="Chromosome"/>
</dbReference>
<dbReference type="GO" id="GO:0005737">
    <property type="term" value="C:cytoplasm"/>
    <property type="evidence" value="ECO:0007669"/>
    <property type="project" value="UniProtKB-SubCell"/>
</dbReference>
<dbReference type="GO" id="GO:0008666">
    <property type="term" value="F:2,3,4,5-tetrahydropyridine-2,6-dicarboxylate N-succinyltransferase activity"/>
    <property type="evidence" value="ECO:0007669"/>
    <property type="project" value="UniProtKB-UniRule"/>
</dbReference>
<dbReference type="GO" id="GO:0019877">
    <property type="term" value="P:diaminopimelate biosynthetic process"/>
    <property type="evidence" value="ECO:0007669"/>
    <property type="project" value="UniProtKB-UniRule"/>
</dbReference>
<dbReference type="GO" id="GO:0009089">
    <property type="term" value="P:lysine biosynthetic process via diaminopimelate"/>
    <property type="evidence" value="ECO:0007669"/>
    <property type="project" value="UniProtKB-UniRule"/>
</dbReference>
<dbReference type="CDD" id="cd03350">
    <property type="entry name" value="LbH_THP_succinylT"/>
    <property type="match status" value="1"/>
</dbReference>
<dbReference type="Gene3D" id="2.160.10.10">
    <property type="entry name" value="Hexapeptide repeat proteins"/>
    <property type="match status" value="1"/>
</dbReference>
<dbReference type="Gene3D" id="1.10.166.10">
    <property type="entry name" value="Tetrahydrodipicolinate-N-succinyltransferase, N-terminal domain"/>
    <property type="match status" value="1"/>
</dbReference>
<dbReference type="HAMAP" id="MF_00811">
    <property type="entry name" value="DapD"/>
    <property type="match status" value="1"/>
</dbReference>
<dbReference type="InterPro" id="IPR005664">
    <property type="entry name" value="DapD_Trfase_Hexpep_rpt_fam"/>
</dbReference>
<dbReference type="InterPro" id="IPR001451">
    <property type="entry name" value="Hexapep"/>
</dbReference>
<dbReference type="InterPro" id="IPR023180">
    <property type="entry name" value="THP_succinylTrfase_dom1"/>
</dbReference>
<dbReference type="InterPro" id="IPR037133">
    <property type="entry name" value="THP_succinylTrfase_N_sf"/>
</dbReference>
<dbReference type="InterPro" id="IPR050179">
    <property type="entry name" value="Trans_hexapeptide_repeat"/>
</dbReference>
<dbReference type="InterPro" id="IPR011004">
    <property type="entry name" value="Trimer_LpxA-like_sf"/>
</dbReference>
<dbReference type="NCBIfam" id="TIGR00965">
    <property type="entry name" value="dapD"/>
    <property type="match status" value="1"/>
</dbReference>
<dbReference type="NCBIfam" id="NF008808">
    <property type="entry name" value="PRK11830.1"/>
    <property type="match status" value="1"/>
</dbReference>
<dbReference type="PANTHER" id="PTHR43300:SF10">
    <property type="entry name" value="2,3,4,5-TETRAHYDROPYRIDINE-2,6-DICARBOXYLATE N-ACETYLTRANSFERASE"/>
    <property type="match status" value="1"/>
</dbReference>
<dbReference type="PANTHER" id="PTHR43300">
    <property type="entry name" value="ACETYLTRANSFERASE"/>
    <property type="match status" value="1"/>
</dbReference>
<dbReference type="Pfam" id="PF00132">
    <property type="entry name" value="Hexapep"/>
    <property type="match status" value="1"/>
</dbReference>
<dbReference type="Pfam" id="PF14602">
    <property type="entry name" value="Hexapep_2"/>
    <property type="match status" value="1"/>
</dbReference>
<dbReference type="Pfam" id="PF14805">
    <property type="entry name" value="THDPS_N_2"/>
    <property type="match status" value="1"/>
</dbReference>
<dbReference type="SUPFAM" id="SSF51161">
    <property type="entry name" value="Trimeric LpxA-like enzymes"/>
    <property type="match status" value="1"/>
</dbReference>
<feature type="chain" id="PRO_0000196980" description="2,3,4,5-tetrahydropyridine-2,6-dicarboxylate N-succinyltransferase">
    <location>
        <begin position="1"/>
        <end position="276"/>
    </location>
</feature>
<feature type="binding site" evidence="1">
    <location>
        <position position="100"/>
    </location>
    <ligand>
        <name>substrate</name>
    </ligand>
</feature>
<feature type="binding site" evidence="1">
    <location>
        <position position="137"/>
    </location>
    <ligand>
        <name>substrate</name>
    </ligand>
</feature>
<gene>
    <name evidence="1" type="primary">dapD</name>
    <name type="ordered locus">ZMO0431</name>
</gene>
<proteinExistence type="inferred from homology"/>
<reference key="1">
    <citation type="journal article" date="2005" name="Nat. Biotechnol.">
        <title>The genome sequence of the ethanologenic bacterium Zymomonas mobilis ZM4.</title>
        <authorList>
            <person name="Seo J.-S."/>
            <person name="Chong H."/>
            <person name="Park H.S."/>
            <person name="Yoon K.-O."/>
            <person name="Jung C."/>
            <person name="Kim J.J."/>
            <person name="Hong J.H."/>
            <person name="Kim H."/>
            <person name="Kim J.-H."/>
            <person name="Kil J.-I."/>
            <person name="Park C.J."/>
            <person name="Oh H.-M."/>
            <person name="Lee J.-S."/>
            <person name="Jin S.-J."/>
            <person name="Um H.-W."/>
            <person name="Lee H.-J."/>
            <person name="Oh S.-J."/>
            <person name="Kim J.Y."/>
            <person name="Kang H.L."/>
            <person name="Lee S.Y."/>
            <person name="Lee K.J."/>
            <person name="Kang H.S."/>
        </authorList>
    </citation>
    <scope>NUCLEOTIDE SEQUENCE [LARGE SCALE GENOMIC DNA]</scope>
    <source>
        <strain>ATCC 31821 / ZM4 / CP4</strain>
    </source>
</reference>
<sequence length="276" mass="29028">MSDLIKIIDQAFEDRANITPATKGEVVEAVEEALSLLDSGKRRVAELGDNGEWVVNQWLKKAVLLSFRLTGNAPMNGGYDKVPLKFTNWSEDQFKQAGFRAVPGAVVRRGAFISKGAVLMPSFVNIGAYVGENTMVDTWATVGSCAQIGANVHISGGAGIGGVLEPLQAGPVIIGDNAFIGARSEVAEGVTVGEGAVLSMGVFIGASTRIIDRATGEIHMGKVPPYAVVVPGSLPGKPLPDGRPGPSLYCAVIVKTADERTRSKTSINQLLREAQN</sequence>
<accession>Q5NQF0</accession>
<evidence type="ECO:0000255" key="1">
    <source>
        <dbReference type="HAMAP-Rule" id="MF_00811"/>
    </source>
</evidence>
<keyword id="KW-0012">Acyltransferase</keyword>
<keyword id="KW-0028">Amino-acid biosynthesis</keyword>
<keyword id="KW-0963">Cytoplasm</keyword>
<keyword id="KW-0220">Diaminopimelate biosynthesis</keyword>
<keyword id="KW-0457">Lysine biosynthesis</keyword>
<keyword id="KW-1185">Reference proteome</keyword>
<keyword id="KW-0677">Repeat</keyword>
<keyword id="KW-0808">Transferase</keyword>
<comment type="catalytic activity">
    <reaction evidence="1">
        <text>(S)-2,3,4,5-tetrahydrodipicolinate + succinyl-CoA + H2O = (S)-2-succinylamino-6-oxoheptanedioate + CoA</text>
        <dbReference type="Rhea" id="RHEA:17325"/>
        <dbReference type="ChEBI" id="CHEBI:15377"/>
        <dbReference type="ChEBI" id="CHEBI:15685"/>
        <dbReference type="ChEBI" id="CHEBI:16845"/>
        <dbReference type="ChEBI" id="CHEBI:57287"/>
        <dbReference type="ChEBI" id="CHEBI:57292"/>
        <dbReference type="EC" id="2.3.1.117"/>
    </reaction>
</comment>
<comment type="pathway">
    <text evidence="1">Amino-acid biosynthesis; L-lysine biosynthesis via DAP pathway; LL-2,6-diaminopimelate from (S)-tetrahydrodipicolinate (succinylase route): step 1/3.</text>
</comment>
<comment type="subunit">
    <text evidence="1">Homotrimer.</text>
</comment>
<comment type="subcellular location">
    <subcellularLocation>
        <location evidence="1">Cytoplasm</location>
    </subcellularLocation>
</comment>
<comment type="similarity">
    <text evidence="1">Belongs to the transferase hexapeptide repeat family.</text>
</comment>
<organism>
    <name type="scientific">Zymomonas mobilis subsp. mobilis (strain ATCC 31821 / ZM4 / CP4)</name>
    <dbReference type="NCBI Taxonomy" id="264203"/>
    <lineage>
        <taxon>Bacteria</taxon>
        <taxon>Pseudomonadati</taxon>
        <taxon>Pseudomonadota</taxon>
        <taxon>Alphaproteobacteria</taxon>
        <taxon>Sphingomonadales</taxon>
        <taxon>Zymomonadaceae</taxon>
        <taxon>Zymomonas</taxon>
    </lineage>
</organism>
<name>DAPD_ZYMMO</name>